<accession>J9VPM2</accession>
<keyword id="KW-0963">Cytoplasm</keyword>
<keyword id="KW-0320">Glycogen biosynthesis</keyword>
<keyword id="KW-0325">Glycoprotein</keyword>
<keyword id="KW-0464">Manganese</keyword>
<keyword id="KW-0479">Metal-binding</keyword>
<keyword id="KW-0808">Transferase</keyword>
<keyword id="KW-0926">Vacuole</keyword>
<evidence type="ECO:0000250" key="1">
    <source>
        <dbReference type="UniProtKB" id="C4R941"/>
    </source>
</evidence>
<evidence type="ECO:0000250" key="2">
    <source>
        <dbReference type="UniProtKB" id="P13280"/>
    </source>
</evidence>
<evidence type="ECO:0000250" key="3">
    <source>
        <dbReference type="UniProtKB" id="P36143"/>
    </source>
</evidence>
<evidence type="ECO:0000250" key="4">
    <source>
        <dbReference type="UniProtKB" id="P46976"/>
    </source>
</evidence>
<evidence type="ECO:0000256" key="5">
    <source>
        <dbReference type="SAM" id="MobiDB-lite"/>
    </source>
</evidence>
<evidence type="ECO:0000269" key="6">
    <source>
    </source>
</evidence>
<evidence type="ECO:0000303" key="7">
    <source>
    </source>
</evidence>
<evidence type="ECO:0000305" key="8"/>
<evidence type="ECO:0000305" key="9">
    <source>
    </source>
</evidence>
<evidence type="ECO:0000312" key="10">
    <source>
        <dbReference type="EMBL" id="AFR94554.1"/>
    </source>
</evidence>
<evidence type="ECO:0000312" key="11">
    <source>
        <dbReference type="Proteomes" id="UP000010091"/>
    </source>
</evidence>
<gene>
    <name evidence="7" type="primary">GLG1</name>
    <name evidence="10" type="ORF">CNAG_05293</name>
</gene>
<reference evidence="11" key="1">
    <citation type="journal article" date="2014" name="PLoS Genet.">
        <title>Analysis of the genome and transcriptome of Cryptococcus neoformans var. grubii reveals complex RNA expression and microevolution leading to virulence attenuation.</title>
        <authorList>
            <person name="Janbon G."/>
            <person name="Ormerod K.L."/>
            <person name="Paulet D."/>
            <person name="Byrnes E.J. III"/>
            <person name="Yadav V."/>
            <person name="Chatterjee G."/>
            <person name="Mullapudi N."/>
            <person name="Hon C.-C."/>
            <person name="Billmyre R.B."/>
            <person name="Brunel F."/>
            <person name="Bahn Y.-S."/>
            <person name="Chen W."/>
            <person name="Chen Y."/>
            <person name="Chow E.W.L."/>
            <person name="Coppee J.-Y."/>
            <person name="Floyd-Averette A."/>
            <person name="Gaillardin C."/>
            <person name="Gerik K.J."/>
            <person name="Goldberg J."/>
            <person name="Gonzalez-Hilarion S."/>
            <person name="Gujja S."/>
            <person name="Hamlin J.L."/>
            <person name="Hsueh Y.-P."/>
            <person name="Ianiri G."/>
            <person name="Jones S."/>
            <person name="Kodira C.D."/>
            <person name="Kozubowski L."/>
            <person name="Lam W."/>
            <person name="Marra M."/>
            <person name="Mesner L.D."/>
            <person name="Mieczkowski P.A."/>
            <person name="Moyrand F."/>
            <person name="Nielsen K."/>
            <person name="Proux C."/>
            <person name="Rossignol T."/>
            <person name="Schein J.E."/>
            <person name="Sun S."/>
            <person name="Wollschlaeger C."/>
            <person name="Wood I.A."/>
            <person name="Zeng Q."/>
            <person name="Neuveglise C."/>
            <person name="Newlon C.S."/>
            <person name="Perfect J.R."/>
            <person name="Lodge J.K."/>
            <person name="Idnurm A."/>
            <person name="Stajich J.E."/>
            <person name="Kronstad J.W."/>
            <person name="Sanyal K."/>
            <person name="Heitman J."/>
            <person name="Fraser J.A."/>
            <person name="Cuomo C.A."/>
            <person name="Dietrich F.S."/>
        </authorList>
    </citation>
    <scope>NUCLEOTIDE SEQUENCE [LARGE SCALE GENOMIC DNA]</scope>
    <source>
        <strain>H99 / ATCC 208821 / CBS 10515 / FGSC 9487</strain>
    </source>
</reference>
<reference evidence="8" key="2">
    <citation type="journal article" date="2024" name="Proc. Natl. Acad. Sci. U.S.A.">
        <title>A fungal protein organizes both glycogen and cell wall glucans.</title>
        <authorList>
            <person name="Loza L."/>
            <person name="Doering T.L."/>
        </authorList>
    </citation>
    <scope>FUNCTION</scope>
    <scope>CATALYTIC ACTIVITY</scope>
    <scope>DISRUPTION PHENOTYPE</scope>
    <scope>MUTAGENESIS OF LYS-94 AND TYR-219</scope>
    <source>
        <strain evidence="7">KN99</strain>
    </source>
</reference>
<organism evidence="11">
    <name type="scientific">Cryptococcus neoformans var. grubii serotype A (strain H99 / ATCC 208821 / CBS 10515 / FGSC 9487)</name>
    <name type="common">Filobasidiella neoformans var. grubii</name>
    <dbReference type="NCBI Taxonomy" id="235443"/>
    <lineage>
        <taxon>Eukaryota</taxon>
        <taxon>Fungi</taxon>
        <taxon>Dikarya</taxon>
        <taxon>Basidiomycota</taxon>
        <taxon>Agaricomycotina</taxon>
        <taxon>Tremellomycetes</taxon>
        <taxon>Tremellales</taxon>
        <taxon>Cryptococcaceae</taxon>
        <taxon>Cryptococcus</taxon>
        <taxon>Cryptococcus neoformans species complex</taxon>
    </lineage>
</organism>
<feature type="chain" id="PRO_0000461103" description="Glycogenin">
    <location>
        <begin position="1"/>
        <end position="926"/>
    </location>
</feature>
<feature type="region of interest" description="Disordered" evidence="5">
    <location>
        <begin position="379"/>
        <end position="432"/>
    </location>
</feature>
<feature type="region of interest" description="Disordered" evidence="5">
    <location>
        <begin position="452"/>
        <end position="476"/>
    </location>
</feature>
<feature type="region of interest" description="Disordered" evidence="5">
    <location>
        <begin position="547"/>
        <end position="584"/>
    </location>
</feature>
<feature type="region of interest" description="Disordered" evidence="5">
    <location>
        <begin position="611"/>
        <end position="749"/>
    </location>
</feature>
<feature type="region of interest" description="Disordered" evidence="5">
    <location>
        <begin position="768"/>
        <end position="903"/>
    </location>
</feature>
<feature type="compositionally biased region" description="Pro residues" evidence="5">
    <location>
        <begin position="386"/>
        <end position="402"/>
    </location>
</feature>
<feature type="compositionally biased region" description="Polar residues" evidence="5">
    <location>
        <begin position="404"/>
        <end position="413"/>
    </location>
</feature>
<feature type="compositionally biased region" description="Basic and acidic residues" evidence="5">
    <location>
        <begin position="456"/>
        <end position="469"/>
    </location>
</feature>
<feature type="compositionally biased region" description="Low complexity" evidence="5">
    <location>
        <begin position="557"/>
        <end position="566"/>
    </location>
</feature>
<feature type="compositionally biased region" description="Polar residues" evidence="5">
    <location>
        <begin position="655"/>
        <end position="683"/>
    </location>
</feature>
<feature type="compositionally biased region" description="Acidic residues" evidence="5">
    <location>
        <begin position="692"/>
        <end position="704"/>
    </location>
</feature>
<feature type="compositionally biased region" description="Basic and acidic residues" evidence="5">
    <location>
        <begin position="733"/>
        <end position="745"/>
    </location>
</feature>
<feature type="compositionally biased region" description="Gly residues" evidence="5">
    <location>
        <begin position="788"/>
        <end position="798"/>
    </location>
</feature>
<feature type="compositionally biased region" description="Polar residues" evidence="5">
    <location>
        <begin position="800"/>
        <end position="812"/>
    </location>
</feature>
<feature type="compositionally biased region" description="Low complexity" evidence="5">
    <location>
        <begin position="813"/>
        <end position="824"/>
    </location>
</feature>
<feature type="compositionally biased region" description="Low complexity" evidence="5">
    <location>
        <begin position="851"/>
        <end position="875"/>
    </location>
</feature>
<feature type="binding site" evidence="4">
    <location>
        <position position="10"/>
    </location>
    <ligand>
        <name>UDP</name>
        <dbReference type="ChEBI" id="CHEBI:58223"/>
    </ligand>
</feature>
<feature type="binding site" evidence="4">
    <location>
        <position position="10"/>
    </location>
    <ligand>
        <name>UDP-alpha-D-glucose</name>
        <dbReference type="ChEBI" id="CHEBI:58885"/>
    </ligand>
</feature>
<feature type="binding site" evidence="4">
    <location>
        <position position="12"/>
    </location>
    <ligand>
        <name>UDP</name>
        <dbReference type="ChEBI" id="CHEBI:58223"/>
    </ligand>
</feature>
<feature type="binding site" evidence="4">
    <location>
        <position position="12"/>
    </location>
    <ligand>
        <name>UDP-alpha-D-glucose</name>
        <dbReference type="ChEBI" id="CHEBI:58885"/>
    </ligand>
</feature>
<feature type="binding site" evidence="4">
    <location>
        <position position="16"/>
    </location>
    <ligand>
        <name>UDP</name>
        <dbReference type="ChEBI" id="CHEBI:58223"/>
    </ligand>
</feature>
<feature type="binding site" evidence="4">
    <location>
        <position position="16"/>
    </location>
    <ligand>
        <name>UDP-alpha-D-glucose</name>
        <dbReference type="ChEBI" id="CHEBI:58885"/>
    </ligand>
</feature>
<feature type="binding site" evidence="4">
    <location>
        <position position="85"/>
    </location>
    <ligand>
        <name>UDP</name>
        <dbReference type="ChEBI" id="CHEBI:58223"/>
    </ligand>
</feature>
<feature type="binding site" evidence="4">
    <location>
        <position position="85"/>
    </location>
    <ligand>
        <name>UDP-alpha-D-glucose</name>
        <dbReference type="ChEBI" id="CHEBI:58885"/>
    </ligand>
</feature>
<feature type="binding site" evidence="4">
    <location>
        <position position="94"/>
    </location>
    <ligand>
        <name>UDP-alpha-D-glucose</name>
        <dbReference type="ChEBI" id="CHEBI:58885"/>
    </ligand>
</feature>
<feature type="binding site" evidence="4">
    <location>
        <position position="111"/>
    </location>
    <ligand>
        <name>Mn(2+)</name>
        <dbReference type="ChEBI" id="CHEBI:29035"/>
    </ligand>
</feature>
<feature type="binding site" evidence="2">
    <location>
        <position position="111"/>
    </location>
    <ligand>
        <name>UDP</name>
        <dbReference type="ChEBI" id="CHEBI:58223"/>
    </ligand>
</feature>
<feature type="binding site" evidence="4">
    <location>
        <position position="111"/>
    </location>
    <ligand>
        <name>UDP-alpha-D-glucose</name>
        <dbReference type="ChEBI" id="CHEBI:58885"/>
    </ligand>
</feature>
<feature type="binding site" evidence="4">
    <location>
        <position position="112"/>
    </location>
    <ligand>
        <name>UDP</name>
        <dbReference type="ChEBI" id="CHEBI:58223"/>
    </ligand>
</feature>
<feature type="binding site" evidence="4">
    <location>
        <position position="112"/>
    </location>
    <ligand>
        <name>UDP-alpha-D-glucose</name>
        <dbReference type="ChEBI" id="CHEBI:58885"/>
    </ligand>
</feature>
<feature type="binding site" evidence="4">
    <location>
        <position position="113"/>
    </location>
    <ligand>
        <name>Mn(2+)</name>
        <dbReference type="ChEBI" id="CHEBI:29035"/>
    </ligand>
</feature>
<feature type="binding site" evidence="4">
    <location>
        <position position="113"/>
    </location>
    <ligand>
        <name>UDP</name>
        <dbReference type="ChEBI" id="CHEBI:58223"/>
    </ligand>
</feature>
<feature type="binding site" evidence="4">
    <location>
        <position position="113"/>
    </location>
    <ligand>
        <name>UDP-alpha-D-glucose</name>
        <dbReference type="ChEBI" id="CHEBI:58885"/>
    </ligand>
</feature>
<feature type="binding site" evidence="4">
    <location>
        <position position="145"/>
    </location>
    <ligand>
        <name>UDP-alpha-D-glucose</name>
        <dbReference type="ChEBI" id="CHEBI:58885"/>
    </ligand>
</feature>
<feature type="binding site" evidence="4">
    <location>
        <position position="146"/>
    </location>
    <ligand>
        <name>UDP-alpha-D-glucose</name>
        <dbReference type="ChEBI" id="CHEBI:58885"/>
    </ligand>
</feature>
<feature type="binding site" evidence="4">
    <location>
        <position position="184"/>
    </location>
    <ligand>
        <name>UDP-alpha-D-glucose</name>
        <dbReference type="ChEBI" id="CHEBI:58885"/>
    </ligand>
</feature>
<feature type="binding site" evidence="4">
    <location>
        <position position="187"/>
    </location>
    <ligand>
        <name>UDP-alpha-D-glucose</name>
        <dbReference type="ChEBI" id="CHEBI:58885"/>
    </ligand>
</feature>
<feature type="binding site" evidence="4">
    <location>
        <position position="188"/>
    </location>
    <ligand>
        <name>UDP-alpha-D-glucose</name>
        <dbReference type="ChEBI" id="CHEBI:58885"/>
    </ligand>
</feature>
<feature type="binding site" evidence="4">
    <location>
        <position position="236"/>
    </location>
    <ligand>
        <name>Mn(2+)</name>
        <dbReference type="ChEBI" id="CHEBI:29035"/>
    </ligand>
</feature>
<feature type="binding site" evidence="2">
    <location>
        <position position="236"/>
    </location>
    <ligand>
        <name>UDP</name>
        <dbReference type="ChEBI" id="CHEBI:58223"/>
    </ligand>
</feature>
<feature type="binding site" evidence="4">
    <location>
        <position position="239"/>
    </location>
    <ligand>
        <name>UDP</name>
        <dbReference type="ChEBI" id="CHEBI:58223"/>
    </ligand>
</feature>
<feature type="binding site" evidence="4">
    <location>
        <position position="239"/>
    </location>
    <ligand>
        <name>UDP-alpha-D-glucose</name>
        <dbReference type="ChEBI" id="CHEBI:58885"/>
    </ligand>
</feature>
<feature type="binding site" evidence="4">
    <location>
        <position position="242"/>
    </location>
    <ligand>
        <name>UDP</name>
        <dbReference type="ChEBI" id="CHEBI:58223"/>
    </ligand>
</feature>
<feature type="binding site" evidence="4">
    <location>
        <position position="242"/>
    </location>
    <ligand>
        <name>UDP-alpha-D-glucose</name>
        <dbReference type="ChEBI" id="CHEBI:58885"/>
    </ligand>
</feature>
<feature type="site" description="Important for catalytic activity" evidence="2">
    <location>
        <position position="94"/>
    </location>
</feature>
<feature type="glycosylation site" description="O-linked (Glc...) tyrosine" evidence="4">
    <location>
        <position position="219"/>
    </location>
</feature>
<feature type="mutagenesis site" description="Leads to a decrease in cellular glycogen at 37 degrees Celsius." evidence="6">
    <original>K</original>
    <variation>A</variation>
    <location>
        <position position="94"/>
    </location>
</feature>
<feature type="mutagenesis site" description="Leads to a decrease in cellular glycogen at 37 degrees Celsius." evidence="6">
    <original>Y</original>
    <variation>A</variation>
    <location>
        <position position="219"/>
    </location>
</feature>
<name>GLG_CRYNH</name>
<proteinExistence type="evidence at protein level"/>
<comment type="function">
    <text evidence="6">Self-glucosylating initiator of glycogen synthesis (PubMed:38743622). It catalyzes the formation of a short alpha (1,4)-glucosyl chain covalently attached via a glucose 1-O-tyrosyl linkage to internal tyrosine residues and these chains act as primers for the elongation reaction catalyzed by glycogen synthase (PubMed:38743622).</text>
</comment>
<comment type="catalytic activity">
    <reaction evidence="9">
        <text>L-tyrosyl-[glycogenin] + UDP-alpha-D-glucose = alpha-D-glucosyl-L-tyrosyl-[glycogenin] + UDP + H(+)</text>
        <dbReference type="Rhea" id="RHEA:23360"/>
        <dbReference type="Rhea" id="RHEA-COMP:14604"/>
        <dbReference type="Rhea" id="RHEA-COMP:14605"/>
        <dbReference type="ChEBI" id="CHEBI:15378"/>
        <dbReference type="ChEBI" id="CHEBI:46858"/>
        <dbReference type="ChEBI" id="CHEBI:58223"/>
        <dbReference type="ChEBI" id="CHEBI:58885"/>
        <dbReference type="ChEBI" id="CHEBI:140573"/>
        <dbReference type="EC" id="2.4.1.186"/>
    </reaction>
</comment>
<comment type="catalytic activity">
    <reaction evidence="9">
        <text>[1,4-alpha-D-glucosyl](n)-L-tyrosyl-[glycogenin] + UDP-alpha-D-glucose = [1,4-alpha-D-glucosyl](n+1)-L-tyrosyl-[glycogenin] + UDP + H(+)</text>
        <dbReference type="Rhea" id="RHEA:56560"/>
        <dbReference type="Rhea" id="RHEA-COMP:14606"/>
        <dbReference type="Rhea" id="RHEA-COMP:14607"/>
        <dbReference type="ChEBI" id="CHEBI:15378"/>
        <dbReference type="ChEBI" id="CHEBI:58223"/>
        <dbReference type="ChEBI" id="CHEBI:58885"/>
        <dbReference type="ChEBI" id="CHEBI:140574"/>
        <dbReference type="EC" id="2.4.1.186"/>
    </reaction>
</comment>
<comment type="cofactor">
    <cofactor evidence="4">
        <name>Mn(2+)</name>
        <dbReference type="ChEBI" id="CHEBI:29035"/>
    </cofactor>
</comment>
<comment type="subcellular location">
    <subcellularLocation>
        <location evidence="1">Cytoplasm</location>
    </subcellularLocation>
    <subcellularLocation>
        <location evidence="1">Vacuole</location>
    </subcellularLocation>
    <text evidence="1">Localizes to glycogen granules (glycosomes) in the cytoplasm. Localizes to the vacuole during nitrogen starvation-induced glycophagy (autophagy of glycosomes).</text>
</comment>
<comment type="disruption phenotype">
    <text evidence="6">Leads to the absence of alpha-1,4-glucan from the cell wall, a decrease in intracellular glycogen at 37 degrees Celsius and abolishes assembly of glycogen rosettes (PubMed:38743622). Leads to a decreased fungal burden in the mouse lung following intranasal inoculation (PubMed:38743622). Simultaneous knockout of GOE1 exacerbates the glycogen synthesis and virulence defect (PubMed:38743622). Does not affect survival in macrophage-like cells (PubMed:38743622).</text>
</comment>
<comment type="similarity">
    <text evidence="8">Belongs to the glycosyltransferase 8 family. Glycogenin subfamily.</text>
</comment>
<dbReference type="EC" id="2.4.1.186" evidence="6"/>
<dbReference type="EMBL" id="CP003823">
    <property type="protein sequence ID" value="AFR94554.1"/>
    <property type="molecule type" value="Genomic_DNA"/>
</dbReference>
<dbReference type="RefSeq" id="XP_012048834.1">
    <property type="nucleotide sequence ID" value="XM_012193444.1"/>
</dbReference>
<dbReference type="SMR" id="J9VPM2"/>
<dbReference type="GeneID" id="23888619"/>
<dbReference type="KEGG" id="cng:CNAG_05293"/>
<dbReference type="VEuPathDB" id="FungiDB:CNAG_05293"/>
<dbReference type="HOGENOM" id="CLU_003372_0_0_1"/>
<dbReference type="OrthoDB" id="8431at5206"/>
<dbReference type="Proteomes" id="UP000010091">
    <property type="component" value="Chromosome 4"/>
</dbReference>
<dbReference type="GO" id="GO:0005737">
    <property type="term" value="C:cytoplasm"/>
    <property type="evidence" value="ECO:0000250"/>
    <property type="project" value="UniProtKB"/>
</dbReference>
<dbReference type="GO" id="GO:0005773">
    <property type="term" value="C:vacuole"/>
    <property type="evidence" value="ECO:0000250"/>
    <property type="project" value="UniProtKB"/>
</dbReference>
<dbReference type="GO" id="GO:0008466">
    <property type="term" value="F:glycogenin glucosyltransferase activity"/>
    <property type="evidence" value="ECO:0000316"/>
    <property type="project" value="UniProtKB"/>
</dbReference>
<dbReference type="GO" id="GO:0046872">
    <property type="term" value="F:metal ion binding"/>
    <property type="evidence" value="ECO:0007669"/>
    <property type="project" value="UniProtKB-KW"/>
</dbReference>
<dbReference type="GO" id="GO:0005978">
    <property type="term" value="P:glycogen biosynthetic process"/>
    <property type="evidence" value="ECO:0000315"/>
    <property type="project" value="UniProtKB"/>
</dbReference>
<dbReference type="CDD" id="cd02537">
    <property type="entry name" value="GT8_Glycogenin"/>
    <property type="match status" value="1"/>
</dbReference>
<dbReference type="FunFam" id="3.90.550.10:FF:000193">
    <property type="entry name" value="Glycogenin glucosyltransferase, putative"/>
    <property type="match status" value="1"/>
</dbReference>
<dbReference type="Gene3D" id="3.90.550.10">
    <property type="entry name" value="Spore Coat Polysaccharide Biosynthesis Protein SpsA, Chain A"/>
    <property type="match status" value="1"/>
</dbReference>
<dbReference type="InterPro" id="IPR002495">
    <property type="entry name" value="Glyco_trans_8"/>
</dbReference>
<dbReference type="InterPro" id="IPR050587">
    <property type="entry name" value="GNT1/Glycosyltrans_8"/>
</dbReference>
<dbReference type="InterPro" id="IPR029044">
    <property type="entry name" value="Nucleotide-diphossugar_trans"/>
</dbReference>
<dbReference type="PANTHER" id="PTHR11183">
    <property type="entry name" value="GLYCOGENIN SUBFAMILY MEMBER"/>
    <property type="match status" value="1"/>
</dbReference>
<dbReference type="Pfam" id="PF01501">
    <property type="entry name" value="Glyco_transf_8"/>
    <property type="match status" value="1"/>
</dbReference>
<dbReference type="SUPFAM" id="SSF53448">
    <property type="entry name" value="Nucleotide-diphospho-sugar transferases"/>
    <property type="match status" value="1"/>
</dbReference>
<sequence>MSLPNAFVTLLTTSSYLPGALVLLHALHDLHPAPRDFQIVALVTPETVDAATIGELRRAGYDLVIGVEPIGSGKAGQVGLELMGRPDLNFALTKLHLFRLAPFFSTLIYLDADILPLRPISHLFTSTAPHVFSACPDTGWPDCFNSGFMVIRPRESDWDGLKGMLKDGEGEDGLYREAGNGSFDGADQGLLNEWFSEDGGGGDWNRLSFTYNVTPSAAYTWAPAYKRFGHKISNVHFIGPNKPWTSLPGRPAGVSNVKGKENSYDYLSLIDRWFAVYDKHVRPASALDPDISRRFAVPQTIAAWDSHANQARAAATVLPEDKLDLSELKAATERGVNAFKPGQYTSLPLEGRVDLIMPKPKAIPRAPISQLVASSTIAPSVSPSALTPPPADAAPAPAPAPVPTQTEQKTAQPSVWDAQRSSPPASAPPEMSVPHAYYHNAWEAPLSQQSSYYAHPESHRPATEHKEPEYPTLPKEVTGDSWYARFATSTPDKRAISAVFPWEEKSYGPGYGHGSRPKPERVFPKGEEPLPSLVQQLIHPLQPPSISIQNPTPPHPAHSQHQSHATGMGMAGQAPKSPSPPPRHVSMVEAMASYKNVWDDIPQIGRYVDIMSGKTGGKSVRGVSTRGHGHGHGHIQGHGQGQKQPQAQTHERNTSLHSLQSVPGTPRTQYSTFGKSPRLTNARNLERRESFEQPEDSADGDDENSTSASEEEGGKSREGNSSKPYKGNKKYKDRWAQTDRVKTVDETVQTQTHAGEEAAAGGLKMWGLPHASAHGRKSSKEIPFPIGSGNGRAGGGGQREAQTQHQSTYYEYQQQHPHSQQSRQGSMASPKPELNVRLPDYSFDFKGATSHAQGLAQAQAQAHGQPQGQGANPNLNAQHRHRPSGSFSTIYGGRGRVWDPNTDVEVRRRDSQEVLARFMQGSLGRG</sequence>
<protein>
    <recommendedName>
        <fullName evidence="7">Glycogenin</fullName>
        <ecNumber evidence="6">2.4.1.186</ecNumber>
    </recommendedName>
    <alternativeName>
        <fullName evidence="8">Glycogen synthesis initiator protein</fullName>
    </alternativeName>
    <alternativeName>
        <fullName evidence="3">Glycogenin glucosyltransferase</fullName>
    </alternativeName>
</protein>